<organism>
    <name type="scientific">Medicago truncatula</name>
    <name type="common">Barrel medic</name>
    <name type="synonym">Medicago tribuloides</name>
    <dbReference type="NCBI Taxonomy" id="3880"/>
    <lineage>
        <taxon>Eukaryota</taxon>
        <taxon>Viridiplantae</taxon>
        <taxon>Streptophyta</taxon>
        <taxon>Embryophyta</taxon>
        <taxon>Tracheophyta</taxon>
        <taxon>Spermatophyta</taxon>
        <taxon>Magnoliopsida</taxon>
        <taxon>eudicotyledons</taxon>
        <taxon>Gunneridae</taxon>
        <taxon>Pentapetalae</taxon>
        <taxon>rosids</taxon>
        <taxon>fabids</taxon>
        <taxon>Fabales</taxon>
        <taxon>Fabaceae</taxon>
        <taxon>Papilionoideae</taxon>
        <taxon>50 kb inversion clade</taxon>
        <taxon>NPAAA clade</taxon>
        <taxon>Hologalegina</taxon>
        <taxon>IRL clade</taxon>
        <taxon>Trifolieae</taxon>
        <taxon>Medicago</taxon>
    </lineage>
</organism>
<name>P171B_MEDTR</name>
<dbReference type="EMBL" id="AC157488">
    <property type="status" value="NOT_ANNOTATED_CDS"/>
    <property type="molecule type" value="Genomic_DNA"/>
</dbReference>
<dbReference type="GO" id="GO:1901332">
    <property type="term" value="P:negative regulation of lateral root development"/>
    <property type="evidence" value="ECO:0000314"/>
    <property type="project" value="UniProtKB"/>
</dbReference>
<dbReference type="GO" id="GO:1902895">
    <property type="term" value="P:positive regulation of miRNA transcription"/>
    <property type="evidence" value="ECO:0000314"/>
    <property type="project" value="GO_Central"/>
</dbReference>
<sequence length="20" mass="2465">MLLHRLSKFCKIERDIVYIS</sequence>
<evidence type="ECO:0000269" key="1">
    <source>
    </source>
</evidence>
<evidence type="ECO:0000303" key="2">
    <source>
    </source>
</evidence>
<protein>
    <recommendedName>
        <fullName evidence="2">Peptide encoded by miPEP171b</fullName>
    </recommendedName>
</protein>
<reference key="1">
    <citation type="journal article" date="2015" name="Nature">
        <title>Primary transcripts of microRNAs encode regulatory peptides.</title>
        <authorList>
            <person name="Lauressergues D."/>
            <person name="Couzigou J.M."/>
            <person name="Clemente H.S."/>
            <person name="Martinez Y."/>
            <person name="Dunand C."/>
            <person name="Becard G."/>
            <person name="Combier J.P."/>
        </authorList>
    </citation>
    <scope>NUCLEOTIDE SEQUENCE [MRNA]</scope>
    <scope>FUNCTION</scope>
    <scope>TISSUE SPECIFICITY</scope>
</reference>
<reference key="2">
    <citation type="submission" date="2005-02" db="EMBL/GenBank/DDBJ databases">
        <authorList>
            <person name="Town C.D."/>
        </authorList>
    </citation>
    <scope>NUCLEOTIDE SEQUENCE [GENOMIC DNA]</scope>
</reference>
<proteinExistence type="evidence at transcript level"/>
<accession>P0DKI8</accession>
<keyword id="KW-0010">Activator</keyword>
<keyword id="KW-0804">Transcription</keyword>
<keyword id="KW-0805">Transcription regulation</keyword>
<comment type="function">
    <text evidence="1">Regulatory peptide encoded by the primary transcript (pri-miR171b) of the microRNA miR171b that enhances the accumulation of its corresponding mature miRNA. Acts probably as a transcriptional activator of its corresponding pri-miRNA. Has no effect on the accumulation of other miRNAs. Addition of synthetic miPEP171b increases the abundance of miR171b, with consequent reduction of lateral root formation.</text>
</comment>
<comment type="tissue specificity">
    <text evidence="1">Lateral root initiations.</text>
</comment>
<feature type="peptide" id="PRO_0000433198" description="Peptide encoded by miPEP171b">
    <location>
        <begin position="1"/>
        <end position="20"/>
    </location>
</feature>